<comment type="function">
    <text evidence="1">Catalyzes the interconversion of L-alanine and D-alanine. May also act on other amino acids.</text>
</comment>
<comment type="catalytic activity">
    <reaction evidence="1">
        <text>L-alanine = D-alanine</text>
        <dbReference type="Rhea" id="RHEA:20249"/>
        <dbReference type="ChEBI" id="CHEBI:57416"/>
        <dbReference type="ChEBI" id="CHEBI:57972"/>
        <dbReference type="EC" id="5.1.1.1"/>
    </reaction>
</comment>
<comment type="cofactor">
    <cofactor evidence="1">
        <name>pyridoxal 5'-phosphate</name>
        <dbReference type="ChEBI" id="CHEBI:597326"/>
    </cofactor>
</comment>
<comment type="pathway">
    <text evidence="1">Amino-acid biosynthesis; D-alanine biosynthesis; D-alanine from L-alanine: step 1/1.</text>
</comment>
<comment type="similarity">
    <text evidence="1">Belongs to the alanine racemase family.</text>
</comment>
<proteinExistence type="inferred from homology"/>
<protein>
    <recommendedName>
        <fullName evidence="1">Alanine racemase</fullName>
        <ecNumber evidence="1">5.1.1.1</ecNumber>
    </recommendedName>
</protein>
<dbReference type="EC" id="5.1.1.1" evidence="1"/>
<dbReference type="EMBL" id="BA000004">
    <property type="protein sequence ID" value="BAB04239.1"/>
    <property type="molecule type" value="Genomic_DNA"/>
</dbReference>
<dbReference type="PIR" id="H83714">
    <property type="entry name" value="H83714"/>
</dbReference>
<dbReference type="RefSeq" id="WP_010896698.1">
    <property type="nucleotide sequence ID" value="NC_002570.2"/>
</dbReference>
<dbReference type="SMR" id="Q9KFF9"/>
<dbReference type="STRING" id="272558.gene:10726373"/>
<dbReference type="KEGG" id="bha:BH0520"/>
<dbReference type="eggNOG" id="COG0787">
    <property type="taxonomic scope" value="Bacteria"/>
</dbReference>
<dbReference type="HOGENOM" id="CLU_028393_2_1_9"/>
<dbReference type="OrthoDB" id="9813814at2"/>
<dbReference type="UniPathway" id="UPA00042">
    <property type="reaction ID" value="UER00497"/>
</dbReference>
<dbReference type="Proteomes" id="UP000001258">
    <property type="component" value="Chromosome"/>
</dbReference>
<dbReference type="GO" id="GO:0005829">
    <property type="term" value="C:cytosol"/>
    <property type="evidence" value="ECO:0007669"/>
    <property type="project" value="TreeGrafter"/>
</dbReference>
<dbReference type="GO" id="GO:0008784">
    <property type="term" value="F:alanine racemase activity"/>
    <property type="evidence" value="ECO:0007669"/>
    <property type="project" value="UniProtKB-UniRule"/>
</dbReference>
<dbReference type="GO" id="GO:0030170">
    <property type="term" value="F:pyridoxal phosphate binding"/>
    <property type="evidence" value="ECO:0007669"/>
    <property type="project" value="UniProtKB-UniRule"/>
</dbReference>
<dbReference type="GO" id="GO:0030632">
    <property type="term" value="P:D-alanine biosynthetic process"/>
    <property type="evidence" value="ECO:0007669"/>
    <property type="project" value="UniProtKB-UniRule"/>
</dbReference>
<dbReference type="GO" id="GO:0009252">
    <property type="term" value="P:peptidoglycan biosynthetic process"/>
    <property type="evidence" value="ECO:0007669"/>
    <property type="project" value="TreeGrafter"/>
</dbReference>
<dbReference type="CDD" id="cd00430">
    <property type="entry name" value="PLPDE_III_AR"/>
    <property type="match status" value="1"/>
</dbReference>
<dbReference type="FunFam" id="2.40.37.10:FF:000006">
    <property type="entry name" value="Alanine racemase"/>
    <property type="match status" value="1"/>
</dbReference>
<dbReference type="FunFam" id="3.20.20.10:FF:000002">
    <property type="entry name" value="Alanine racemase"/>
    <property type="match status" value="1"/>
</dbReference>
<dbReference type="Gene3D" id="3.20.20.10">
    <property type="entry name" value="Alanine racemase"/>
    <property type="match status" value="1"/>
</dbReference>
<dbReference type="Gene3D" id="2.40.37.10">
    <property type="entry name" value="Lyase, Ornithine Decarboxylase, Chain A, domain 1"/>
    <property type="match status" value="1"/>
</dbReference>
<dbReference type="HAMAP" id="MF_01201">
    <property type="entry name" value="Ala_racemase"/>
    <property type="match status" value="1"/>
</dbReference>
<dbReference type="InterPro" id="IPR000821">
    <property type="entry name" value="Ala_racemase"/>
</dbReference>
<dbReference type="InterPro" id="IPR009006">
    <property type="entry name" value="Ala_racemase/Decarboxylase_C"/>
</dbReference>
<dbReference type="InterPro" id="IPR011079">
    <property type="entry name" value="Ala_racemase_C"/>
</dbReference>
<dbReference type="InterPro" id="IPR001608">
    <property type="entry name" value="Ala_racemase_N"/>
</dbReference>
<dbReference type="InterPro" id="IPR020622">
    <property type="entry name" value="Ala_racemase_pyridoxalP-BS"/>
</dbReference>
<dbReference type="InterPro" id="IPR029066">
    <property type="entry name" value="PLP-binding_barrel"/>
</dbReference>
<dbReference type="NCBIfam" id="TIGR00492">
    <property type="entry name" value="alr"/>
    <property type="match status" value="1"/>
</dbReference>
<dbReference type="PANTHER" id="PTHR30511">
    <property type="entry name" value="ALANINE RACEMASE"/>
    <property type="match status" value="1"/>
</dbReference>
<dbReference type="PANTHER" id="PTHR30511:SF0">
    <property type="entry name" value="ALANINE RACEMASE, CATABOLIC-RELATED"/>
    <property type="match status" value="1"/>
</dbReference>
<dbReference type="Pfam" id="PF00842">
    <property type="entry name" value="Ala_racemase_C"/>
    <property type="match status" value="1"/>
</dbReference>
<dbReference type="Pfam" id="PF01168">
    <property type="entry name" value="Ala_racemase_N"/>
    <property type="match status" value="1"/>
</dbReference>
<dbReference type="PRINTS" id="PR00992">
    <property type="entry name" value="ALARACEMASE"/>
</dbReference>
<dbReference type="SMART" id="SM01005">
    <property type="entry name" value="Ala_racemase_C"/>
    <property type="match status" value="1"/>
</dbReference>
<dbReference type="SUPFAM" id="SSF50621">
    <property type="entry name" value="Alanine racemase C-terminal domain-like"/>
    <property type="match status" value="1"/>
</dbReference>
<dbReference type="SUPFAM" id="SSF51419">
    <property type="entry name" value="PLP-binding barrel"/>
    <property type="match status" value="1"/>
</dbReference>
<dbReference type="PROSITE" id="PS00395">
    <property type="entry name" value="ALANINE_RACEMASE"/>
    <property type="match status" value="1"/>
</dbReference>
<name>ALR_HALH5</name>
<organism>
    <name type="scientific">Halalkalibacterium halodurans (strain ATCC BAA-125 / DSM 18197 / FERM 7344 / JCM 9153 / C-125)</name>
    <name type="common">Bacillus halodurans</name>
    <dbReference type="NCBI Taxonomy" id="272558"/>
    <lineage>
        <taxon>Bacteria</taxon>
        <taxon>Bacillati</taxon>
        <taxon>Bacillota</taxon>
        <taxon>Bacilli</taxon>
        <taxon>Bacillales</taxon>
        <taxon>Bacillaceae</taxon>
        <taxon>Halalkalibacterium (ex Joshi et al. 2022)</taxon>
    </lineage>
</organism>
<accession>Q9KFF9</accession>
<reference key="1">
    <citation type="journal article" date="2000" name="Nucleic Acids Res.">
        <title>Complete genome sequence of the alkaliphilic bacterium Bacillus halodurans and genomic sequence comparison with Bacillus subtilis.</title>
        <authorList>
            <person name="Takami H."/>
            <person name="Nakasone K."/>
            <person name="Takaki Y."/>
            <person name="Maeno G."/>
            <person name="Sasaki R."/>
            <person name="Masui N."/>
            <person name="Fuji F."/>
            <person name="Hirama C."/>
            <person name="Nakamura Y."/>
            <person name="Ogasawara N."/>
            <person name="Kuhara S."/>
            <person name="Horikoshi K."/>
        </authorList>
    </citation>
    <scope>NUCLEOTIDE SEQUENCE [LARGE SCALE GENOMIC DNA]</scope>
    <source>
        <strain>ATCC BAA-125 / DSM 18197 / FERM 7344 / JCM 9153 / C-125</strain>
    </source>
</reference>
<evidence type="ECO:0000255" key="1">
    <source>
        <dbReference type="HAMAP-Rule" id="MF_01201"/>
    </source>
</evidence>
<keyword id="KW-0413">Isomerase</keyword>
<keyword id="KW-0663">Pyridoxal phosphate</keyword>
<keyword id="KW-1185">Reference proteome</keyword>
<sequence length="388" mass="44021">MEHFYRDTWVEVDLDAIEQNVTNALRLYKDREMNLMAVVKANGYGHGAVEVSQAALRAGASYLSVAFLDEALALRKAGIDAPILVMGLVGAEHVQLAIKHRITLTVYQLDWLEQAISRLHTRDKLAIHLKLDTGMGRIGLRRKEDIRSCMDFIASHECFELEGVFTHFATADEKDLTYFKKQCQRFNQWLEYIREWQLPIRYVHCGNSAAGLRFPEKNFNMFRFGIAMYGLTPSPEITDELPFPLKQAFSLKSRLSNVKKLPKGEGISYGATYVTEGAEWIGTLPIGYADGWIRHHSNAGGHVLIDGKRAPFVGRICMDQCMIRLPKKHSIGDTVTLIGESDGKQITMDEVAKRLNTINYEIPCVISWRVPRIYFRDGQIISVKNNLL</sequence>
<feature type="chain" id="PRO_0000114497" description="Alanine racemase">
    <location>
        <begin position="1"/>
        <end position="388"/>
    </location>
</feature>
<feature type="active site" description="Proton acceptor; specific for D-alanine" evidence="1">
    <location>
        <position position="40"/>
    </location>
</feature>
<feature type="active site" description="Proton acceptor; specific for L-alanine" evidence="1">
    <location>
        <position position="269"/>
    </location>
</feature>
<feature type="binding site" evidence="1">
    <location>
        <position position="137"/>
    </location>
    <ligand>
        <name>substrate</name>
    </ligand>
</feature>
<feature type="binding site" evidence="1">
    <location>
        <position position="318"/>
    </location>
    <ligand>
        <name>substrate</name>
    </ligand>
</feature>
<feature type="modified residue" description="N6-(pyridoxal phosphate)lysine" evidence="1">
    <location>
        <position position="40"/>
    </location>
</feature>
<gene>
    <name type="primary">alr</name>
    <name type="ordered locus">BH0520</name>
</gene>